<evidence type="ECO:0000255" key="1">
    <source>
        <dbReference type="HAMAP-Rule" id="MF_01309"/>
    </source>
</evidence>
<evidence type="ECO:0000305" key="2"/>
<comment type="function">
    <text evidence="1">Binds the lower part of the 30S subunit head. Binds mRNA in the 70S ribosome, positioning it for translation.</text>
</comment>
<comment type="subunit">
    <text evidence="1">Part of the 30S ribosomal subunit. Forms a tight complex with proteins S10 and S14.</text>
</comment>
<comment type="similarity">
    <text evidence="1">Belongs to the universal ribosomal protein uS3 family.</text>
</comment>
<dbReference type="EMBL" id="AE000657">
    <property type="protein sequence ID" value="AAC06398.1"/>
    <property type="molecule type" value="Genomic_DNA"/>
</dbReference>
<dbReference type="PIR" id="B70301">
    <property type="entry name" value="B70301"/>
</dbReference>
<dbReference type="RefSeq" id="NP_212995.1">
    <property type="nucleotide sequence ID" value="NC_000918.1"/>
</dbReference>
<dbReference type="SMR" id="O66437"/>
<dbReference type="FunCoup" id="O66437">
    <property type="interactions" value="539"/>
</dbReference>
<dbReference type="STRING" id="224324.aq_017"/>
<dbReference type="EnsemblBacteria" id="AAC06398">
    <property type="protein sequence ID" value="AAC06398"/>
    <property type="gene ID" value="aq_017"/>
</dbReference>
<dbReference type="KEGG" id="aae:aq_017"/>
<dbReference type="PATRIC" id="fig|224324.8.peg.10"/>
<dbReference type="eggNOG" id="COG0092">
    <property type="taxonomic scope" value="Bacteria"/>
</dbReference>
<dbReference type="HOGENOM" id="CLU_058591_0_2_0"/>
<dbReference type="InParanoid" id="O66437"/>
<dbReference type="OrthoDB" id="9806396at2"/>
<dbReference type="Proteomes" id="UP000000798">
    <property type="component" value="Chromosome"/>
</dbReference>
<dbReference type="GO" id="GO:0022627">
    <property type="term" value="C:cytosolic small ribosomal subunit"/>
    <property type="evidence" value="ECO:0000318"/>
    <property type="project" value="GO_Central"/>
</dbReference>
<dbReference type="GO" id="GO:0003729">
    <property type="term" value="F:mRNA binding"/>
    <property type="evidence" value="ECO:0007669"/>
    <property type="project" value="UniProtKB-UniRule"/>
</dbReference>
<dbReference type="GO" id="GO:0019843">
    <property type="term" value="F:rRNA binding"/>
    <property type="evidence" value="ECO:0007669"/>
    <property type="project" value="UniProtKB-UniRule"/>
</dbReference>
<dbReference type="GO" id="GO:0003735">
    <property type="term" value="F:structural constituent of ribosome"/>
    <property type="evidence" value="ECO:0000318"/>
    <property type="project" value="GO_Central"/>
</dbReference>
<dbReference type="GO" id="GO:0006412">
    <property type="term" value="P:translation"/>
    <property type="evidence" value="ECO:0007669"/>
    <property type="project" value="UniProtKB-UniRule"/>
</dbReference>
<dbReference type="CDD" id="cd02412">
    <property type="entry name" value="KH-II_30S_S3"/>
    <property type="match status" value="1"/>
</dbReference>
<dbReference type="FunFam" id="3.30.1140.32:FF:000002">
    <property type="entry name" value="30S ribosomal protein S3"/>
    <property type="match status" value="1"/>
</dbReference>
<dbReference type="FunFam" id="3.30.300.20:FF:000001">
    <property type="entry name" value="30S ribosomal protein S3"/>
    <property type="match status" value="1"/>
</dbReference>
<dbReference type="Gene3D" id="3.30.300.20">
    <property type="match status" value="1"/>
</dbReference>
<dbReference type="Gene3D" id="3.30.1140.32">
    <property type="entry name" value="Ribosomal protein S3, C-terminal domain"/>
    <property type="match status" value="1"/>
</dbReference>
<dbReference type="HAMAP" id="MF_01309_B">
    <property type="entry name" value="Ribosomal_uS3_B"/>
    <property type="match status" value="1"/>
</dbReference>
<dbReference type="InterPro" id="IPR004087">
    <property type="entry name" value="KH_dom"/>
</dbReference>
<dbReference type="InterPro" id="IPR015946">
    <property type="entry name" value="KH_dom-like_a/b"/>
</dbReference>
<dbReference type="InterPro" id="IPR004044">
    <property type="entry name" value="KH_dom_type_2"/>
</dbReference>
<dbReference type="InterPro" id="IPR009019">
    <property type="entry name" value="KH_sf_prok-type"/>
</dbReference>
<dbReference type="InterPro" id="IPR036419">
    <property type="entry name" value="Ribosomal_S3_C_sf"/>
</dbReference>
<dbReference type="InterPro" id="IPR005704">
    <property type="entry name" value="Ribosomal_uS3_bac-typ"/>
</dbReference>
<dbReference type="InterPro" id="IPR001351">
    <property type="entry name" value="Ribosomal_uS3_C"/>
</dbReference>
<dbReference type="InterPro" id="IPR018280">
    <property type="entry name" value="Ribosomal_uS3_CS"/>
</dbReference>
<dbReference type="NCBIfam" id="TIGR01009">
    <property type="entry name" value="rpsC_bact"/>
    <property type="match status" value="1"/>
</dbReference>
<dbReference type="PANTHER" id="PTHR11760">
    <property type="entry name" value="30S/40S RIBOSOMAL PROTEIN S3"/>
    <property type="match status" value="1"/>
</dbReference>
<dbReference type="PANTHER" id="PTHR11760:SF19">
    <property type="entry name" value="SMALL RIBOSOMAL SUBUNIT PROTEIN US3C"/>
    <property type="match status" value="1"/>
</dbReference>
<dbReference type="Pfam" id="PF07650">
    <property type="entry name" value="KH_2"/>
    <property type="match status" value="1"/>
</dbReference>
<dbReference type="Pfam" id="PF00189">
    <property type="entry name" value="Ribosomal_S3_C"/>
    <property type="match status" value="1"/>
</dbReference>
<dbReference type="SMART" id="SM00322">
    <property type="entry name" value="KH"/>
    <property type="match status" value="1"/>
</dbReference>
<dbReference type="SUPFAM" id="SSF54814">
    <property type="entry name" value="Prokaryotic type KH domain (KH-domain type II)"/>
    <property type="match status" value="1"/>
</dbReference>
<dbReference type="SUPFAM" id="SSF54821">
    <property type="entry name" value="Ribosomal protein S3 C-terminal domain"/>
    <property type="match status" value="1"/>
</dbReference>
<dbReference type="PROSITE" id="PS50823">
    <property type="entry name" value="KH_TYPE_2"/>
    <property type="match status" value="1"/>
</dbReference>
<dbReference type="PROSITE" id="PS00548">
    <property type="entry name" value="RIBOSOMAL_S3"/>
    <property type="match status" value="1"/>
</dbReference>
<feature type="chain" id="PRO_0000130061" description="Small ribosomal subunit protein uS3">
    <location>
        <begin position="1"/>
        <end position="212"/>
    </location>
</feature>
<feature type="domain" description="KH type-2" evidence="1">
    <location>
        <begin position="39"/>
        <end position="108"/>
    </location>
</feature>
<organism>
    <name type="scientific">Aquifex aeolicus (strain VF5)</name>
    <dbReference type="NCBI Taxonomy" id="224324"/>
    <lineage>
        <taxon>Bacteria</taxon>
        <taxon>Pseudomonadati</taxon>
        <taxon>Aquificota</taxon>
        <taxon>Aquificia</taxon>
        <taxon>Aquificales</taxon>
        <taxon>Aquificaceae</taxon>
        <taxon>Aquifex</taxon>
    </lineage>
</organism>
<gene>
    <name evidence="1" type="primary">rpsC</name>
    <name type="ordered locus">aq_017</name>
</gene>
<accession>O66437</accession>
<keyword id="KW-1185">Reference proteome</keyword>
<keyword id="KW-0687">Ribonucleoprotein</keyword>
<keyword id="KW-0689">Ribosomal protein</keyword>
<keyword id="KW-0694">RNA-binding</keyword>
<keyword id="KW-0699">rRNA-binding</keyword>
<proteinExistence type="inferred from homology"/>
<protein>
    <recommendedName>
        <fullName evidence="1">Small ribosomal subunit protein uS3</fullName>
    </recommendedName>
    <alternativeName>
        <fullName evidence="2">30S ribosomal protein S3</fullName>
    </alternativeName>
</protein>
<reference key="1">
    <citation type="journal article" date="1998" name="Nature">
        <title>The complete genome of the hyperthermophilic bacterium Aquifex aeolicus.</title>
        <authorList>
            <person name="Deckert G."/>
            <person name="Warren P.V."/>
            <person name="Gaasterland T."/>
            <person name="Young W.G."/>
            <person name="Lenox A.L."/>
            <person name="Graham D.E."/>
            <person name="Overbeek R."/>
            <person name="Snead M.A."/>
            <person name="Keller M."/>
            <person name="Aujay M."/>
            <person name="Huber R."/>
            <person name="Feldman R.A."/>
            <person name="Short J.M."/>
            <person name="Olsen G.J."/>
            <person name="Swanson R.V."/>
        </authorList>
    </citation>
    <scope>NUCLEOTIDE SEQUENCE [LARGE SCALE GENOMIC DNA]</scope>
    <source>
        <strain>VF5</strain>
    </source>
</reference>
<name>RS3_AQUAE</name>
<sequence length="212" mass="24155">MGQKTHPIGFRLGVIKEWPSKWYAPKKEYSKLLHEDLKIKNYIKERYKVAGVSKVEIERIVDKVRVKIHTARPAIVIGRRGQEVENLKKTLEKMLPGKEITISVVEVRVPELDAQLVAQDIATQIERRVSHRRAMKRAIDNALKAGAKGVKVQVKGRIGGAELARKEWFLVGRMPLQTLRADIDYGFATAYTKYGILSVKVWIYKGDVLNGR</sequence>